<protein>
    <recommendedName>
        <fullName evidence="1">UPF0434 protein Pput_3813</fullName>
    </recommendedName>
</protein>
<comment type="similarity">
    <text evidence="1">Belongs to the UPF0434 family.</text>
</comment>
<proteinExistence type="inferred from homology"/>
<feature type="chain" id="PRO_1000065850" description="UPF0434 protein Pput_3813">
    <location>
        <begin position="1"/>
        <end position="61"/>
    </location>
</feature>
<sequence length="61" mass="6642">MDTKLLDILACPITKGPLKLSADKTELISKGAGLAYPIRDGIPVMLESEARTLTDDERLDK</sequence>
<reference key="1">
    <citation type="submission" date="2007-05" db="EMBL/GenBank/DDBJ databases">
        <title>Complete sequence of Pseudomonas putida F1.</title>
        <authorList>
            <consortium name="US DOE Joint Genome Institute"/>
            <person name="Copeland A."/>
            <person name="Lucas S."/>
            <person name="Lapidus A."/>
            <person name="Barry K."/>
            <person name="Detter J.C."/>
            <person name="Glavina del Rio T."/>
            <person name="Hammon N."/>
            <person name="Israni S."/>
            <person name="Dalin E."/>
            <person name="Tice H."/>
            <person name="Pitluck S."/>
            <person name="Chain P."/>
            <person name="Malfatti S."/>
            <person name="Shin M."/>
            <person name="Vergez L."/>
            <person name="Schmutz J."/>
            <person name="Larimer F."/>
            <person name="Land M."/>
            <person name="Hauser L."/>
            <person name="Kyrpides N."/>
            <person name="Lykidis A."/>
            <person name="Parales R."/>
            <person name="Richardson P."/>
        </authorList>
    </citation>
    <scope>NUCLEOTIDE SEQUENCE [LARGE SCALE GENOMIC DNA]</scope>
    <source>
        <strain>ATCC 700007 / DSM 6899 / JCM 31910 / BCRC 17059 / LMG 24140 / F1</strain>
    </source>
</reference>
<dbReference type="EMBL" id="CP000712">
    <property type="protein sequence ID" value="ABQ79937.1"/>
    <property type="molecule type" value="Genomic_DNA"/>
</dbReference>
<dbReference type="SMR" id="A5W727"/>
<dbReference type="KEGG" id="ppf:Pput_3813"/>
<dbReference type="eggNOG" id="COG2835">
    <property type="taxonomic scope" value="Bacteria"/>
</dbReference>
<dbReference type="HOGENOM" id="CLU_155659_3_1_6"/>
<dbReference type="GO" id="GO:0005829">
    <property type="term" value="C:cytosol"/>
    <property type="evidence" value="ECO:0007669"/>
    <property type="project" value="TreeGrafter"/>
</dbReference>
<dbReference type="FunFam" id="2.20.25.10:FF:000002">
    <property type="entry name" value="UPF0434 protein YcaR"/>
    <property type="match status" value="1"/>
</dbReference>
<dbReference type="Gene3D" id="2.20.25.10">
    <property type="match status" value="1"/>
</dbReference>
<dbReference type="HAMAP" id="MF_01187">
    <property type="entry name" value="UPF0434"/>
    <property type="match status" value="1"/>
</dbReference>
<dbReference type="InterPro" id="IPR005651">
    <property type="entry name" value="Trm112-like"/>
</dbReference>
<dbReference type="PANTHER" id="PTHR33505:SF4">
    <property type="entry name" value="PROTEIN PREY, MITOCHONDRIAL"/>
    <property type="match status" value="1"/>
</dbReference>
<dbReference type="PANTHER" id="PTHR33505">
    <property type="entry name" value="ZGC:162634"/>
    <property type="match status" value="1"/>
</dbReference>
<dbReference type="Pfam" id="PF03966">
    <property type="entry name" value="Trm112p"/>
    <property type="match status" value="1"/>
</dbReference>
<dbReference type="SUPFAM" id="SSF158997">
    <property type="entry name" value="Trm112p-like"/>
    <property type="match status" value="1"/>
</dbReference>
<evidence type="ECO:0000255" key="1">
    <source>
        <dbReference type="HAMAP-Rule" id="MF_01187"/>
    </source>
</evidence>
<gene>
    <name type="ordered locus">Pput_3813</name>
</gene>
<name>Y3813_PSEP1</name>
<accession>A5W727</accession>
<organism>
    <name type="scientific">Pseudomonas putida (strain ATCC 700007 / DSM 6899 / JCM 31910 / BCRC 17059 / LMG 24140 / F1)</name>
    <dbReference type="NCBI Taxonomy" id="351746"/>
    <lineage>
        <taxon>Bacteria</taxon>
        <taxon>Pseudomonadati</taxon>
        <taxon>Pseudomonadota</taxon>
        <taxon>Gammaproteobacteria</taxon>
        <taxon>Pseudomonadales</taxon>
        <taxon>Pseudomonadaceae</taxon>
        <taxon>Pseudomonas</taxon>
    </lineage>
</organism>